<name>SYC_STRPM</name>
<sequence length="447" mass="50463">MIKIYDTMTRSLRKFVPLTENTVNMYVCGPTVYNYIHIGNARSAVAFDTIRRYFEYTGYQVNYISNFTDVDDKIIKAATQAGVSPKELSDRFIAAFIEDTKALGVKPATQNPRVMDYIAEIISFVESLIEKDFAYEADGDVYFRVEKSEHYAKLANKTLSELEVGASGRTDAETALKENPLDFALWKSAKAGEVSWDSPWGFGRPGWHIECSVMATEILGDTIDIHGGGADLEFPHHTNEIAQSEAKTGKTFANYWMHNGFVTVDNEKMSKSLGNFVTVHDMLQTVDGQVLRFFLATQQYRKPINFTEKAIHDAEINLKYLKNTLQQPLTETADEQELKQFVIAFQDAMDDDFNTANGITVVFDMAKWINSGSYTEPVKSAFEKMLAVFGIIFEEEVLEVDIEALIAKRQEARANRDFAIADAIRDQLAAQGIKLLDTKDGVRWLRD</sequence>
<organism>
    <name type="scientific">Streptococcus pyogenes serotype M28 (strain MGAS6180)</name>
    <dbReference type="NCBI Taxonomy" id="319701"/>
    <lineage>
        <taxon>Bacteria</taxon>
        <taxon>Bacillati</taxon>
        <taxon>Bacillota</taxon>
        <taxon>Bacilli</taxon>
        <taxon>Lactobacillales</taxon>
        <taxon>Streptococcaceae</taxon>
        <taxon>Streptococcus</taxon>
    </lineage>
</organism>
<feature type="chain" id="PRO_0000240963" description="Cysteine--tRNA ligase">
    <location>
        <begin position="1"/>
        <end position="447"/>
    </location>
</feature>
<feature type="short sequence motif" description="'HIGH' region">
    <location>
        <begin position="30"/>
        <end position="40"/>
    </location>
</feature>
<feature type="short sequence motif" description="'KMSKS' region">
    <location>
        <begin position="268"/>
        <end position="272"/>
    </location>
</feature>
<feature type="binding site" evidence="1">
    <location>
        <position position="28"/>
    </location>
    <ligand>
        <name>Zn(2+)</name>
        <dbReference type="ChEBI" id="CHEBI:29105"/>
    </ligand>
</feature>
<feature type="binding site" evidence="1">
    <location>
        <position position="211"/>
    </location>
    <ligand>
        <name>Zn(2+)</name>
        <dbReference type="ChEBI" id="CHEBI:29105"/>
    </ligand>
</feature>
<feature type="binding site" evidence="1">
    <location>
        <position position="236"/>
    </location>
    <ligand>
        <name>Zn(2+)</name>
        <dbReference type="ChEBI" id="CHEBI:29105"/>
    </ligand>
</feature>
<feature type="binding site" evidence="1">
    <location>
        <position position="240"/>
    </location>
    <ligand>
        <name>Zn(2+)</name>
        <dbReference type="ChEBI" id="CHEBI:29105"/>
    </ligand>
</feature>
<feature type="binding site" evidence="1">
    <location>
        <position position="271"/>
    </location>
    <ligand>
        <name>ATP</name>
        <dbReference type="ChEBI" id="CHEBI:30616"/>
    </ligand>
</feature>
<evidence type="ECO:0000255" key="1">
    <source>
        <dbReference type="HAMAP-Rule" id="MF_00041"/>
    </source>
</evidence>
<reference key="1">
    <citation type="journal article" date="2005" name="J. Infect. Dis.">
        <title>Genome sequence of a serotype M28 strain of group A Streptococcus: potential new insights into puerperal sepsis and bacterial disease specificity.</title>
        <authorList>
            <person name="Green N.M."/>
            <person name="Zhang S."/>
            <person name="Porcella S.F."/>
            <person name="Nagiec M.J."/>
            <person name="Barbian K.D."/>
            <person name="Beres S.B."/>
            <person name="Lefebvre R.B."/>
            <person name="Musser J.M."/>
        </authorList>
    </citation>
    <scope>NUCLEOTIDE SEQUENCE [LARGE SCALE GENOMIC DNA]</scope>
    <source>
        <strain>MGAS6180</strain>
    </source>
</reference>
<keyword id="KW-0030">Aminoacyl-tRNA synthetase</keyword>
<keyword id="KW-0067">ATP-binding</keyword>
<keyword id="KW-0963">Cytoplasm</keyword>
<keyword id="KW-0436">Ligase</keyword>
<keyword id="KW-0479">Metal-binding</keyword>
<keyword id="KW-0547">Nucleotide-binding</keyword>
<keyword id="KW-0648">Protein biosynthesis</keyword>
<keyword id="KW-0862">Zinc</keyword>
<dbReference type="EC" id="6.1.1.16" evidence="1"/>
<dbReference type="EMBL" id="CP000056">
    <property type="protein sequence ID" value="AAX72753.1"/>
    <property type="molecule type" value="Genomic_DNA"/>
</dbReference>
<dbReference type="RefSeq" id="WP_011285182.1">
    <property type="nucleotide sequence ID" value="NC_007296.2"/>
</dbReference>
<dbReference type="SMR" id="Q48RA7"/>
<dbReference type="KEGG" id="spb:M28_Spy1643"/>
<dbReference type="HOGENOM" id="CLU_013528_0_1_9"/>
<dbReference type="GO" id="GO:0005829">
    <property type="term" value="C:cytosol"/>
    <property type="evidence" value="ECO:0007669"/>
    <property type="project" value="TreeGrafter"/>
</dbReference>
<dbReference type="GO" id="GO:0005524">
    <property type="term" value="F:ATP binding"/>
    <property type="evidence" value="ECO:0007669"/>
    <property type="project" value="UniProtKB-UniRule"/>
</dbReference>
<dbReference type="GO" id="GO:0004817">
    <property type="term" value="F:cysteine-tRNA ligase activity"/>
    <property type="evidence" value="ECO:0007669"/>
    <property type="project" value="UniProtKB-UniRule"/>
</dbReference>
<dbReference type="GO" id="GO:0008270">
    <property type="term" value="F:zinc ion binding"/>
    <property type="evidence" value="ECO:0007669"/>
    <property type="project" value="UniProtKB-UniRule"/>
</dbReference>
<dbReference type="GO" id="GO:0006423">
    <property type="term" value="P:cysteinyl-tRNA aminoacylation"/>
    <property type="evidence" value="ECO:0007669"/>
    <property type="project" value="UniProtKB-UniRule"/>
</dbReference>
<dbReference type="CDD" id="cd00672">
    <property type="entry name" value="CysRS_core"/>
    <property type="match status" value="1"/>
</dbReference>
<dbReference type="FunFam" id="3.40.50.620:FF:000130">
    <property type="entry name" value="Cysteine--tRNA ligase"/>
    <property type="match status" value="1"/>
</dbReference>
<dbReference type="Gene3D" id="1.20.120.640">
    <property type="entry name" value="Anticodon-binding domain of a subclass of class I aminoacyl-tRNA synthetases"/>
    <property type="match status" value="1"/>
</dbReference>
<dbReference type="Gene3D" id="3.40.50.620">
    <property type="entry name" value="HUPs"/>
    <property type="match status" value="1"/>
</dbReference>
<dbReference type="HAMAP" id="MF_00041">
    <property type="entry name" value="Cys_tRNA_synth"/>
    <property type="match status" value="1"/>
</dbReference>
<dbReference type="InterPro" id="IPR015803">
    <property type="entry name" value="Cys-tRNA-ligase"/>
</dbReference>
<dbReference type="InterPro" id="IPR015273">
    <property type="entry name" value="Cys-tRNA-synt_Ia_DALR"/>
</dbReference>
<dbReference type="InterPro" id="IPR024909">
    <property type="entry name" value="Cys-tRNA/MSH_ligase"/>
</dbReference>
<dbReference type="InterPro" id="IPR056411">
    <property type="entry name" value="CysS_C"/>
</dbReference>
<dbReference type="InterPro" id="IPR014729">
    <property type="entry name" value="Rossmann-like_a/b/a_fold"/>
</dbReference>
<dbReference type="InterPro" id="IPR032678">
    <property type="entry name" value="tRNA-synt_1_cat_dom"/>
</dbReference>
<dbReference type="InterPro" id="IPR009080">
    <property type="entry name" value="tRNAsynth_Ia_anticodon-bd"/>
</dbReference>
<dbReference type="NCBIfam" id="TIGR00435">
    <property type="entry name" value="cysS"/>
    <property type="match status" value="1"/>
</dbReference>
<dbReference type="PANTHER" id="PTHR10890:SF3">
    <property type="entry name" value="CYSTEINE--TRNA LIGASE, CYTOPLASMIC"/>
    <property type="match status" value="1"/>
</dbReference>
<dbReference type="PANTHER" id="PTHR10890">
    <property type="entry name" value="CYSTEINYL-TRNA SYNTHETASE"/>
    <property type="match status" value="1"/>
</dbReference>
<dbReference type="Pfam" id="PF23493">
    <property type="entry name" value="CysS_C"/>
    <property type="match status" value="1"/>
</dbReference>
<dbReference type="Pfam" id="PF09190">
    <property type="entry name" value="DALR_2"/>
    <property type="match status" value="1"/>
</dbReference>
<dbReference type="Pfam" id="PF01406">
    <property type="entry name" value="tRNA-synt_1e"/>
    <property type="match status" value="1"/>
</dbReference>
<dbReference type="PRINTS" id="PR00983">
    <property type="entry name" value="TRNASYNTHCYS"/>
</dbReference>
<dbReference type="SMART" id="SM00840">
    <property type="entry name" value="DALR_2"/>
    <property type="match status" value="1"/>
</dbReference>
<dbReference type="SUPFAM" id="SSF47323">
    <property type="entry name" value="Anticodon-binding domain of a subclass of class I aminoacyl-tRNA synthetases"/>
    <property type="match status" value="1"/>
</dbReference>
<dbReference type="SUPFAM" id="SSF52374">
    <property type="entry name" value="Nucleotidylyl transferase"/>
    <property type="match status" value="1"/>
</dbReference>
<accession>Q48RA7</accession>
<protein>
    <recommendedName>
        <fullName evidence="1">Cysteine--tRNA ligase</fullName>
        <ecNumber evidence="1">6.1.1.16</ecNumber>
    </recommendedName>
    <alternativeName>
        <fullName evidence="1">Cysteinyl-tRNA synthetase</fullName>
        <shortName evidence="1">CysRS</shortName>
    </alternativeName>
</protein>
<comment type="catalytic activity">
    <reaction evidence="1">
        <text>tRNA(Cys) + L-cysteine + ATP = L-cysteinyl-tRNA(Cys) + AMP + diphosphate</text>
        <dbReference type="Rhea" id="RHEA:17773"/>
        <dbReference type="Rhea" id="RHEA-COMP:9661"/>
        <dbReference type="Rhea" id="RHEA-COMP:9679"/>
        <dbReference type="ChEBI" id="CHEBI:30616"/>
        <dbReference type="ChEBI" id="CHEBI:33019"/>
        <dbReference type="ChEBI" id="CHEBI:35235"/>
        <dbReference type="ChEBI" id="CHEBI:78442"/>
        <dbReference type="ChEBI" id="CHEBI:78517"/>
        <dbReference type="ChEBI" id="CHEBI:456215"/>
        <dbReference type="EC" id="6.1.1.16"/>
    </reaction>
</comment>
<comment type="cofactor">
    <cofactor evidence="1">
        <name>Zn(2+)</name>
        <dbReference type="ChEBI" id="CHEBI:29105"/>
    </cofactor>
    <text evidence="1">Binds 1 zinc ion per subunit.</text>
</comment>
<comment type="subunit">
    <text evidence="1">Monomer.</text>
</comment>
<comment type="subcellular location">
    <subcellularLocation>
        <location evidence="1">Cytoplasm</location>
    </subcellularLocation>
</comment>
<comment type="similarity">
    <text evidence="1">Belongs to the class-I aminoacyl-tRNA synthetase family.</text>
</comment>
<gene>
    <name evidence="1" type="primary">cysS</name>
    <name type="ordered locus">M28_Spy1643</name>
</gene>
<proteinExistence type="inferred from homology"/>